<protein>
    <recommendedName>
        <fullName evidence="1">Large ribosomal subunit protein uL14</fullName>
    </recommendedName>
    <alternativeName>
        <fullName evidence="2">50S ribosomal protein L14</fullName>
    </alternativeName>
</protein>
<sequence>MIQQESRLVVADNSGAKEALCIRVLGGTRRRYASVGDIIVVSVKSVIPSSDIKKGAVSKAVIVRTKKEVRRPDGSYIRFDDNACVLLNAAGDIRGSRIFGPVARELRGTNMKIVSLAPEVL</sequence>
<keyword id="KW-0687">Ribonucleoprotein</keyword>
<keyword id="KW-0689">Ribosomal protein</keyword>
<keyword id="KW-0694">RNA-binding</keyword>
<keyword id="KW-0699">rRNA-binding</keyword>
<gene>
    <name evidence="1" type="primary">rplN</name>
    <name type="ordered locus">PGN_1858</name>
</gene>
<feature type="chain" id="PRO_1000144310" description="Large ribosomal subunit protein uL14">
    <location>
        <begin position="1"/>
        <end position="121"/>
    </location>
</feature>
<accession>B2RLY2</accession>
<comment type="function">
    <text evidence="1">Binds to 23S rRNA. Forms part of two intersubunit bridges in the 70S ribosome.</text>
</comment>
<comment type="subunit">
    <text evidence="1">Part of the 50S ribosomal subunit. Forms a cluster with proteins L3 and L19. In the 70S ribosome, L14 and L19 interact and together make contacts with the 16S rRNA in bridges B5 and B8.</text>
</comment>
<comment type="similarity">
    <text evidence="1">Belongs to the universal ribosomal protein uL14 family.</text>
</comment>
<evidence type="ECO:0000255" key="1">
    <source>
        <dbReference type="HAMAP-Rule" id="MF_01367"/>
    </source>
</evidence>
<evidence type="ECO:0000305" key="2"/>
<reference key="1">
    <citation type="journal article" date="2008" name="DNA Res.">
        <title>Determination of the genome sequence of Porphyromonas gingivalis strain ATCC 33277 and genomic comparison with strain W83 revealed extensive genome rearrangements in P. gingivalis.</title>
        <authorList>
            <person name="Naito M."/>
            <person name="Hirakawa H."/>
            <person name="Yamashita A."/>
            <person name="Ohara N."/>
            <person name="Shoji M."/>
            <person name="Yukitake H."/>
            <person name="Nakayama K."/>
            <person name="Toh H."/>
            <person name="Yoshimura F."/>
            <person name="Kuhara S."/>
            <person name="Hattori M."/>
            <person name="Hayashi T."/>
            <person name="Nakayama K."/>
        </authorList>
    </citation>
    <scope>NUCLEOTIDE SEQUENCE [LARGE SCALE GENOMIC DNA]</scope>
    <source>
        <strain>ATCC 33277 / DSM 20709 / CIP 103683 / JCM 12257 / NCTC 11834 / 2561</strain>
    </source>
</reference>
<proteinExistence type="inferred from homology"/>
<organism>
    <name type="scientific">Porphyromonas gingivalis (strain ATCC 33277 / DSM 20709 / CIP 103683 / JCM 12257 / NCTC 11834 / 2561)</name>
    <dbReference type="NCBI Taxonomy" id="431947"/>
    <lineage>
        <taxon>Bacteria</taxon>
        <taxon>Pseudomonadati</taxon>
        <taxon>Bacteroidota</taxon>
        <taxon>Bacteroidia</taxon>
        <taxon>Bacteroidales</taxon>
        <taxon>Porphyromonadaceae</taxon>
        <taxon>Porphyromonas</taxon>
    </lineage>
</organism>
<dbReference type="EMBL" id="AP009380">
    <property type="protein sequence ID" value="BAG34377.1"/>
    <property type="molecule type" value="Genomic_DNA"/>
</dbReference>
<dbReference type="RefSeq" id="WP_004583588.1">
    <property type="nucleotide sequence ID" value="NZ_CP025930.1"/>
</dbReference>
<dbReference type="SMR" id="B2RLY2"/>
<dbReference type="GeneID" id="57239586"/>
<dbReference type="KEGG" id="pgn:PGN_1858"/>
<dbReference type="eggNOG" id="COG0093">
    <property type="taxonomic scope" value="Bacteria"/>
</dbReference>
<dbReference type="HOGENOM" id="CLU_095071_2_1_10"/>
<dbReference type="OrthoDB" id="9806379at2"/>
<dbReference type="BioCyc" id="PGIN431947:G1G2V-2072-MONOMER"/>
<dbReference type="Proteomes" id="UP000008842">
    <property type="component" value="Chromosome"/>
</dbReference>
<dbReference type="GO" id="GO:0022625">
    <property type="term" value="C:cytosolic large ribosomal subunit"/>
    <property type="evidence" value="ECO:0007669"/>
    <property type="project" value="TreeGrafter"/>
</dbReference>
<dbReference type="GO" id="GO:0070180">
    <property type="term" value="F:large ribosomal subunit rRNA binding"/>
    <property type="evidence" value="ECO:0007669"/>
    <property type="project" value="TreeGrafter"/>
</dbReference>
<dbReference type="GO" id="GO:0003735">
    <property type="term" value="F:structural constituent of ribosome"/>
    <property type="evidence" value="ECO:0007669"/>
    <property type="project" value="InterPro"/>
</dbReference>
<dbReference type="GO" id="GO:0006412">
    <property type="term" value="P:translation"/>
    <property type="evidence" value="ECO:0007669"/>
    <property type="project" value="UniProtKB-UniRule"/>
</dbReference>
<dbReference type="CDD" id="cd00337">
    <property type="entry name" value="Ribosomal_uL14"/>
    <property type="match status" value="1"/>
</dbReference>
<dbReference type="FunFam" id="2.40.150.20:FF:000001">
    <property type="entry name" value="50S ribosomal protein L14"/>
    <property type="match status" value="1"/>
</dbReference>
<dbReference type="Gene3D" id="2.40.150.20">
    <property type="entry name" value="Ribosomal protein L14"/>
    <property type="match status" value="1"/>
</dbReference>
<dbReference type="HAMAP" id="MF_01367">
    <property type="entry name" value="Ribosomal_uL14"/>
    <property type="match status" value="1"/>
</dbReference>
<dbReference type="InterPro" id="IPR000218">
    <property type="entry name" value="Ribosomal_uL14"/>
</dbReference>
<dbReference type="InterPro" id="IPR005745">
    <property type="entry name" value="Ribosomal_uL14_bac-type"/>
</dbReference>
<dbReference type="InterPro" id="IPR019972">
    <property type="entry name" value="Ribosomal_uL14_CS"/>
</dbReference>
<dbReference type="InterPro" id="IPR036853">
    <property type="entry name" value="Ribosomal_uL14_sf"/>
</dbReference>
<dbReference type="NCBIfam" id="TIGR01067">
    <property type="entry name" value="rplN_bact"/>
    <property type="match status" value="1"/>
</dbReference>
<dbReference type="PANTHER" id="PTHR11761">
    <property type="entry name" value="50S/60S RIBOSOMAL PROTEIN L14/L23"/>
    <property type="match status" value="1"/>
</dbReference>
<dbReference type="PANTHER" id="PTHR11761:SF3">
    <property type="entry name" value="LARGE RIBOSOMAL SUBUNIT PROTEIN UL14M"/>
    <property type="match status" value="1"/>
</dbReference>
<dbReference type="Pfam" id="PF00238">
    <property type="entry name" value="Ribosomal_L14"/>
    <property type="match status" value="1"/>
</dbReference>
<dbReference type="SMART" id="SM01374">
    <property type="entry name" value="Ribosomal_L14"/>
    <property type="match status" value="1"/>
</dbReference>
<dbReference type="SUPFAM" id="SSF50193">
    <property type="entry name" value="Ribosomal protein L14"/>
    <property type="match status" value="1"/>
</dbReference>
<dbReference type="PROSITE" id="PS00049">
    <property type="entry name" value="RIBOSOMAL_L14"/>
    <property type="match status" value="1"/>
</dbReference>
<name>RL14_PORG3</name>